<proteinExistence type="inferred from homology"/>
<accession>B8EJS2</accession>
<evidence type="ECO:0000255" key="1">
    <source>
        <dbReference type="HAMAP-Rule" id="MF_00211"/>
    </source>
</evidence>
<dbReference type="EC" id="2.4.2.18" evidence="1"/>
<dbReference type="EMBL" id="CP001280">
    <property type="protein sequence ID" value="ACK49476.1"/>
    <property type="molecule type" value="Genomic_DNA"/>
</dbReference>
<dbReference type="RefSeq" id="WP_012589546.1">
    <property type="nucleotide sequence ID" value="NC_011666.1"/>
</dbReference>
<dbReference type="SMR" id="B8EJS2"/>
<dbReference type="STRING" id="395965.Msil_0504"/>
<dbReference type="KEGG" id="msl:Msil_0504"/>
<dbReference type="eggNOG" id="COG0547">
    <property type="taxonomic scope" value="Bacteria"/>
</dbReference>
<dbReference type="HOGENOM" id="CLU_034315_2_1_5"/>
<dbReference type="OrthoDB" id="9806430at2"/>
<dbReference type="UniPathway" id="UPA00035">
    <property type="reaction ID" value="UER00041"/>
</dbReference>
<dbReference type="Proteomes" id="UP000002257">
    <property type="component" value="Chromosome"/>
</dbReference>
<dbReference type="GO" id="GO:0005829">
    <property type="term" value="C:cytosol"/>
    <property type="evidence" value="ECO:0007669"/>
    <property type="project" value="TreeGrafter"/>
</dbReference>
<dbReference type="GO" id="GO:0004048">
    <property type="term" value="F:anthranilate phosphoribosyltransferase activity"/>
    <property type="evidence" value="ECO:0007669"/>
    <property type="project" value="UniProtKB-UniRule"/>
</dbReference>
<dbReference type="GO" id="GO:0000287">
    <property type="term" value="F:magnesium ion binding"/>
    <property type="evidence" value="ECO:0007669"/>
    <property type="project" value="UniProtKB-UniRule"/>
</dbReference>
<dbReference type="GO" id="GO:0000162">
    <property type="term" value="P:L-tryptophan biosynthetic process"/>
    <property type="evidence" value="ECO:0007669"/>
    <property type="project" value="UniProtKB-UniRule"/>
</dbReference>
<dbReference type="FunFam" id="3.40.1030.10:FF:000002">
    <property type="entry name" value="Anthranilate phosphoribosyltransferase"/>
    <property type="match status" value="1"/>
</dbReference>
<dbReference type="Gene3D" id="3.40.1030.10">
    <property type="entry name" value="Nucleoside phosphorylase/phosphoribosyltransferase catalytic domain"/>
    <property type="match status" value="1"/>
</dbReference>
<dbReference type="Gene3D" id="1.20.970.10">
    <property type="entry name" value="Transferase, Pyrimidine Nucleoside Phosphorylase, Chain C"/>
    <property type="match status" value="1"/>
</dbReference>
<dbReference type="HAMAP" id="MF_00211">
    <property type="entry name" value="TrpD"/>
    <property type="match status" value="1"/>
</dbReference>
<dbReference type="InterPro" id="IPR005940">
    <property type="entry name" value="Anthranilate_Pribosyl_Tfrase"/>
</dbReference>
<dbReference type="InterPro" id="IPR000312">
    <property type="entry name" value="Glycosyl_Trfase_fam3"/>
</dbReference>
<dbReference type="InterPro" id="IPR017459">
    <property type="entry name" value="Glycosyl_Trfase_fam3_N_dom"/>
</dbReference>
<dbReference type="InterPro" id="IPR036320">
    <property type="entry name" value="Glycosyl_Trfase_fam3_N_dom_sf"/>
</dbReference>
<dbReference type="InterPro" id="IPR035902">
    <property type="entry name" value="Nuc_phospho_transferase"/>
</dbReference>
<dbReference type="NCBIfam" id="TIGR01245">
    <property type="entry name" value="trpD"/>
    <property type="match status" value="1"/>
</dbReference>
<dbReference type="PANTHER" id="PTHR43285">
    <property type="entry name" value="ANTHRANILATE PHOSPHORIBOSYLTRANSFERASE"/>
    <property type="match status" value="1"/>
</dbReference>
<dbReference type="PANTHER" id="PTHR43285:SF2">
    <property type="entry name" value="ANTHRANILATE PHOSPHORIBOSYLTRANSFERASE"/>
    <property type="match status" value="1"/>
</dbReference>
<dbReference type="Pfam" id="PF02885">
    <property type="entry name" value="Glycos_trans_3N"/>
    <property type="match status" value="1"/>
</dbReference>
<dbReference type="Pfam" id="PF00591">
    <property type="entry name" value="Glycos_transf_3"/>
    <property type="match status" value="1"/>
</dbReference>
<dbReference type="SUPFAM" id="SSF52418">
    <property type="entry name" value="Nucleoside phosphorylase/phosphoribosyltransferase catalytic domain"/>
    <property type="match status" value="1"/>
</dbReference>
<dbReference type="SUPFAM" id="SSF47648">
    <property type="entry name" value="Nucleoside phosphorylase/phosphoribosyltransferase N-terminal domain"/>
    <property type="match status" value="1"/>
</dbReference>
<protein>
    <recommendedName>
        <fullName evidence="1">Anthranilate phosphoribosyltransferase</fullName>
        <ecNumber evidence="1">2.4.2.18</ecNumber>
    </recommendedName>
</protein>
<keyword id="KW-0028">Amino-acid biosynthesis</keyword>
<keyword id="KW-0057">Aromatic amino acid biosynthesis</keyword>
<keyword id="KW-0328">Glycosyltransferase</keyword>
<keyword id="KW-0460">Magnesium</keyword>
<keyword id="KW-0479">Metal-binding</keyword>
<keyword id="KW-1185">Reference proteome</keyword>
<keyword id="KW-0808">Transferase</keyword>
<keyword id="KW-0822">Tryptophan biosynthesis</keyword>
<comment type="function">
    <text evidence="1">Catalyzes the transfer of the phosphoribosyl group of 5-phosphorylribose-1-pyrophosphate (PRPP) to anthranilate to yield N-(5'-phosphoribosyl)-anthranilate (PRA).</text>
</comment>
<comment type="catalytic activity">
    <reaction evidence="1">
        <text>N-(5-phospho-beta-D-ribosyl)anthranilate + diphosphate = 5-phospho-alpha-D-ribose 1-diphosphate + anthranilate</text>
        <dbReference type="Rhea" id="RHEA:11768"/>
        <dbReference type="ChEBI" id="CHEBI:16567"/>
        <dbReference type="ChEBI" id="CHEBI:18277"/>
        <dbReference type="ChEBI" id="CHEBI:33019"/>
        <dbReference type="ChEBI" id="CHEBI:58017"/>
        <dbReference type="EC" id="2.4.2.18"/>
    </reaction>
</comment>
<comment type="cofactor">
    <cofactor evidence="1">
        <name>Mg(2+)</name>
        <dbReference type="ChEBI" id="CHEBI:18420"/>
    </cofactor>
    <text evidence="1">Binds 2 magnesium ions per monomer.</text>
</comment>
<comment type="pathway">
    <text evidence="1">Amino-acid biosynthesis; L-tryptophan biosynthesis; L-tryptophan from chorismate: step 2/5.</text>
</comment>
<comment type="subunit">
    <text evidence="1">Homodimer.</text>
</comment>
<comment type="similarity">
    <text evidence="1">Belongs to the anthranilate phosphoribosyltransferase family.</text>
</comment>
<organism>
    <name type="scientific">Methylocella silvestris (strain DSM 15510 / CIP 108128 / LMG 27833 / NCIMB 13906 / BL2)</name>
    <dbReference type="NCBI Taxonomy" id="395965"/>
    <lineage>
        <taxon>Bacteria</taxon>
        <taxon>Pseudomonadati</taxon>
        <taxon>Pseudomonadota</taxon>
        <taxon>Alphaproteobacteria</taxon>
        <taxon>Hyphomicrobiales</taxon>
        <taxon>Beijerinckiaceae</taxon>
        <taxon>Methylocella</taxon>
    </lineage>
</organism>
<name>TRPD_METSB</name>
<feature type="chain" id="PRO_1000198831" description="Anthranilate phosphoribosyltransferase">
    <location>
        <begin position="1"/>
        <end position="349"/>
    </location>
</feature>
<feature type="binding site" evidence="1">
    <location>
        <position position="81"/>
    </location>
    <ligand>
        <name>5-phospho-alpha-D-ribose 1-diphosphate</name>
        <dbReference type="ChEBI" id="CHEBI:58017"/>
    </ligand>
</feature>
<feature type="binding site" evidence="1">
    <location>
        <position position="81"/>
    </location>
    <ligand>
        <name>anthranilate</name>
        <dbReference type="ChEBI" id="CHEBI:16567"/>
        <label>1</label>
    </ligand>
</feature>
<feature type="binding site" evidence="1">
    <location>
        <begin position="84"/>
        <end position="85"/>
    </location>
    <ligand>
        <name>5-phospho-alpha-D-ribose 1-diphosphate</name>
        <dbReference type="ChEBI" id="CHEBI:58017"/>
    </ligand>
</feature>
<feature type="binding site" evidence="1">
    <location>
        <position position="89"/>
    </location>
    <ligand>
        <name>5-phospho-alpha-D-ribose 1-diphosphate</name>
        <dbReference type="ChEBI" id="CHEBI:58017"/>
    </ligand>
</feature>
<feature type="binding site" evidence="1">
    <location>
        <begin position="91"/>
        <end position="94"/>
    </location>
    <ligand>
        <name>5-phospho-alpha-D-ribose 1-diphosphate</name>
        <dbReference type="ChEBI" id="CHEBI:58017"/>
    </ligand>
</feature>
<feature type="binding site" evidence="1">
    <location>
        <position position="93"/>
    </location>
    <ligand>
        <name>Mg(2+)</name>
        <dbReference type="ChEBI" id="CHEBI:18420"/>
        <label>1</label>
    </ligand>
</feature>
<feature type="binding site" evidence="1">
    <location>
        <begin position="109"/>
        <end position="117"/>
    </location>
    <ligand>
        <name>5-phospho-alpha-D-ribose 1-diphosphate</name>
        <dbReference type="ChEBI" id="CHEBI:58017"/>
    </ligand>
</feature>
<feature type="binding site" evidence="1">
    <location>
        <position position="112"/>
    </location>
    <ligand>
        <name>anthranilate</name>
        <dbReference type="ChEBI" id="CHEBI:16567"/>
        <label>1</label>
    </ligand>
</feature>
<feature type="binding site" evidence="1">
    <location>
        <position position="121"/>
    </location>
    <ligand>
        <name>5-phospho-alpha-D-ribose 1-diphosphate</name>
        <dbReference type="ChEBI" id="CHEBI:58017"/>
    </ligand>
</feature>
<feature type="binding site" evidence="1">
    <location>
        <position position="167"/>
    </location>
    <ligand>
        <name>anthranilate</name>
        <dbReference type="ChEBI" id="CHEBI:16567"/>
        <label>2</label>
    </ligand>
</feature>
<feature type="binding site" evidence="1">
    <location>
        <position position="226"/>
    </location>
    <ligand>
        <name>Mg(2+)</name>
        <dbReference type="ChEBI" id="CHEBI:18420"/>
        <label>2</label>
    </ligand>
</feature>
<feature type="binding site" evidence="1">
    <location>
        <position position="227"/>
    </location>
    <ligand>
        <name>Mg(2+)</name>
        <dbReference type="ChEBI" id="CHEBI:18420"/>
        <label>1</label>
    </ligand>
</feature>
<feature type="binding site" evidence="1">
    <location>
        <position position="227"/>
    </location>
    <ligand>
        <name>Mg(2+)</name>
        <dbReference type="ChEBI" id="CHEBI:18420"/>
        <label>2</label>
    </ligand>
</feature>
<gene>
    <name evidence="1" type="primary">trpD</name>
    <name type="ordered locus">Msil_0504</name>
</gene>
<reference key="1">
    <citation type="journal article" date="2010" name="J. Bacteriol.">
        <title>Complete genome sequence of the aerobic facultative methanotroph Methylocella silvestris BL2.</title>
        <authorList>
            <person name="Chen Y."/>
            <person name="Crombie A."/>
            <person name="Rahman M.T."/>
            <person name="Dedysh S.N."/>
            <person name="Liesack W."/>
            <person name="Stott M.B."/>
            <person name="Alam M."/>
            <person name="Theisen A.R."/>
            <person name="Murrell J.C."/>
            <person name="Dunfield P.F."/>
        </authorList>
    </citation>
    <scope>NUCLEOTIDE SEQUENCE [LARGE SCALE GENOMIC DNA]</scope>
    <source>
        <strain>DSM 15510 / CIP 108128 / LMG 27833 / NCIMB 13906 / BL2</strain>
    </source>
</reference>
<sequence>MDAMKPLLGKLATGASLTQAEATRAFDLIFEGAATPAQLGAFLMALRVRGETIDEIVGAVAAMRARMLRVDAPADAMDIVGTGGDGHSTYNVSTLAALIVSACGVPVAKHGNRAASSQSGASDVLSALGVKIGLDSREVEACLEAAGVAFMSAQAHHAAMRHVAAARAELGTRTIFNILGPLANPAGVKFQLLGVYAKSWLEPLAQALRALGSTRVWLVHGADGLDEATTTGPTHVVALENGAIRAFDITPEDAGLQRAALADLKGGSPAFNAAALKAVLEGRKSPYRDIAILNAAAALIVAGRAADLREGARLAAAAIDDGRAASTLSKLVEASNRASLPAVAAGSCP</sequence>